<evidence type="ECO:0000255" key="1">
    <source>
        <dbReference type="HAMAP-Rule" id="MF_01389"/>
    </source>
</evidence>
<keyword id="KW-0143">Chaperone</keyword>
<keyword id="KW-0963">Cytoplasm</keyword>
<keyword id="KW-0342">GTP-binding</keyword>
<keyword id="KW-0996">Nickel insertion</keyword>
<keyword id="KW-0547">Nucleotide-binding</keyword>
<gene>
    <name evidence="1" type="primary">ureG</name>
    <name type="ordered locus">Rpal_4708</name>
</gene>
<feature type="chain" id="PRO_1000145218" description="Urease accessory protein UreG">
    <location>
        <begin position="1"/>
        <end position="209"/>
    </location>
</feature>
<feature type="binding site" evidence="1">
    <location>
        <begin position="14"/>
        <end position="21"/>
    </location>
    <ligand>
        <name>GTP</name>
        <dbReference type="ChEBI" id="CHEBI:37565"/>
    </ligand>
</feature>
<reference key="1">
    <citation type="submission" date="2008-05" db="EMBL/GenBank/DDBJ databases">
        <title>Complete sequence of Rhodopseudomonas palustris TIE-1.</title>
        <authorList>
            <consortium name="US DOE Joint Genome Institute"/>
            <person name="Lucas S."/>
            <person name="Copeland A."/>
            <person name="Lapidus A."/>
            <person name="Glavina del Rio T."/>
            <person name="Dalin E."/>
            <person name="Tice H."/>
            <person name="Pitluck S."/>
            <person name="Chain P."/>
            <person name="Malfatti S."/>
            <person name="Shin M."/>
            <person name="Vergez L."/>
            <person name="Lang D."/>
            <person name="Schmutz J."/>
            <person name="Larimer F."/>
            <person name="Land M."/>
            <person name="Hauser L."/>
            <person name="Kyrpides N."/>
            <person name="Mikhailova N."/>
            <person name="Emerson D."/>
            <person name="Newman D.K."/>
            <person name="Roden E."/>
            <person name="Richardson P."/>
        </authorList>
    </citation>
    <scope>NUCLEOTIDE SEQUENCE [LARGE SCALE GENOMIC DNA]</scope>
    <source>
        <strain>TIE-1</strain>
    </source>
</reference>
<dbReference type="EMBL" id="CP001096">
    <property type="protein sequence ID" value="ACF03199.1"/>
    <property type="molecule type" value="Genomic_DNA"/>
</dbReference>
<dbReference type="RefSeq" id="WP_011159762.1">
    <property type="nucleotide sequence ID" value="NC_011004.1"/>
</dbReference>
<dbReference type="SMR" id="B3Q6Q0"/>
<dbReference type="GeneID" id="66895353"/>
<dbReference type="KEGG" id="rpt:Rpal_4708"/>
<dbReference type="HOGENOM" id="CLU_072144_1_0_5"/>
<dbReference type="OrthoDB" id="9802035at2"/>
<dbReference type="Proteomes" id="UP000001725">
    <property type="component" value="Chromosome"/>
</dbReference>
<dbReference type="GO" id="GO:0005737">
    <property type="term" value="C:cytoplasm"/>
    <property type="evidence" value="ECO:0007669"/>
    <property type="project" value="UniProtKB-SubCell"/>
</dbReference>
<dbReference type="GO" id="GO:0005525">
    <property type="term" value="F:GTP binding"/>
    <property type="evidence" value="ECO:0007669"/>
    <property type="project" value="UniProtKB-KW"/>
</dbReference>
<dbReference type="GO" id="GO:0003924">
    <property type="term" value="F:GTPase activity"/>
    <property type="evidence" value="ECO:0007669"/>
    <property type="project" value="InterPro"/>
</dbReference>
<dbReference type="GO" id="GO:0016151">
    <property type="term" value="F:nickel cation binding"/>
    <property type="evidence" value="ECO:0007669"/>
    <property type="project" value="UniProtKB-UniRule"/>
</dbReference>
<dbReference type="GO" id="GO:0043419">
    <property type="term" value="P:urea catabolic process"/>
    <property type="evidence" value="ECO:0007669"/>
    <property type="project" value="InterPro"/>
</dbReference>
<dbReference type="CDD" id="cd05540">
    <property type="entry name" value="UreG"/>
    <property type="match status" value="1"/>
</dbReference>
<dbReference type="FunFam" id="3.40.50.300:FF:000208">
    <property type="entry name" value="Urease accessory protein UreG"/>
    <property type="match status" value="1"/>
</dbReference>
<dbReference type="Gene3D" id="3.40.50.300">
    <property type="entry name" value="P-loop containing nucleotide triphosphate hydrolases"/>
    <property type="match status" value="1"/>
</dbReference>
<dbReference type="HAMAP" id="MF_01389">
    <property type="entry name" value="UreG"/>
    <property type="match status" value="1"/>
</dbReference>
<dbReference type="InterPro" id="IPR003495">
    <property type="entry name" value="CobW/HypB/UreG_nucleotide-bd"/>
</dbReference>
<dbReference type="InterPro" id="IPR027417">
    <property type="entry name" value="P-loop_NTPase"/>
</dbReference>
<dbReference type="InterPro" id="IPR004400">
    <property type="entry name" value="UreG"/>
</dbReference>
<dbReference type="NCBIfam" id="TIGR00101">
    <property type="entry name" value="ureG"/>
    <property type="match status" value="1"/>
</dbReference>
<dbReference type="PANTHER" id="PTHR31715">
    <property type="entry name" value="UREASE ACCESSORY PROTEIN G"/>
    <property type="match status" value="1"/>
</dbReference>
<dbReference type="PANTHER" id="PTHR31715:SF0">
    <property type="entry name" value="UREASE ACCESSORY PROTEIN G"/>
    <property type="match status" value="1"/>
</dbReference>
<dbReference type="Pfam" id="PF02492">
    <property type="entry name" value="cobW"/>
    <property type="match status" value="1"/>
</dbReference>
<dbReference type="PIRSF" id="PIRSF005624">
    <property type="entry name" value="Ni-bind_GTPase"/>
    <property type="match status" value="1"/>
</dbReference>
<dbReference type="SUPFAM" id="SSF52540">
    <property type="entry name" value="P-loop containing nucleoside triphosphate hydrolases"/>
    <property type="match status" value="1"/>
</dbReference>
<proteinExistence type="inferred from homology"/>
<accession>B3Q6Q0</accession>
<comment type="function">
    <text evidence="1">Facilitates the functional incorporation of the urease nickel metallocenter. This process requires GTP hydrolysis, probably effectuated by UreG.</text>
</comment>
<comment type="subunit">
    <text evidence="1">Homodimer. UreD, UreF and UreG form a complex that acts as a GTP-hydrolysis-dependent molecular chaperone, activating the urease apoprotein by helping to assemble the nickel containing metallocenter of UreC. The UreE protein probably delivers the nickel.</text>
</comment>
<comment type="subcellular location">
    <subcellularLocation>
        <location evidence="1">Cytoplasm</location>
    </subcellularLocation>
</comment>
<comment type="similarity">
    <text evidence="1">Belongs to the SIMIBI class G3E GTPase family. UreG subfamily.</text>
</comment>
<sequence length="209" mass="22331">MSDHHGPLRVGIGGPVGSGKTALMDLLCKSMRERYDIAAITNDIYTKWDAEFLVRSGSLTPDRIAGVETGGCPHTAIREDASMNLAAVAEMRSKFPGLDLVLIESGGDNLAATFSPELADITIYVIDVAAGDKIPSKGGPGITRSDLLVINKIDLAPYVGASLEKMDTDAKRMRGARPFVMTNLKKSEGLDRIIGFIEEKGGLTPRRSA</sequence>
<protein>
    <recommendedName>
        <fullName evidence="1">Urease accessory protein UreG</fullName>
    </recommendedName>
</protein>
<organism>
    <name type="scientific">Rhodopseudomonas palustris (strain TIE-1)</name>
    <dbReference type="NCBI Taxonomy" id="395960"/>
    <lineage>
        <taxon>Bacteria</taxon>
        <taxon>Pseudomonadati</taxon>
        <taxon>Pseudomonadota</taxon>
        <taxon>Alphaproteobacteria</taxon>
        <taxon>Hyphomicrobiales</taxon>
        <taxon>Nitrobacteraceae</taxon>
        <taxon>Rhodopseudomonas</taxon>
    </lineage>
</organism>
<name>UREG_RHOPT</name>